<gene>
    <name type="primary">SH3BGRL2</name>
</gene>
<proteinExistence type="inferred from homology"/>
<protein>
    <recommendedName>
        <fullName>SH3 domain-binding glutamic acid-rich-like protein 2</fullName>
    </recommendedName>
</protein>
<name>SH3L2_PONAB</name>
<organism>
    <name type="scientific">Pongo abelii</name>
    <name type="common">Sumatran orangutan</name>
    <name type="synonym">Pongo pygmaeus abelii</name>
    <dbReference type="NCBI Taxonomy" id="9601"/>
    <lineage>
        <taxon>Eukaryota</taxon>
        <taxon>Metazoa</taxon>
        <taxon>Chordata</taxon>
        <taxon>Craniata</taxon>
        <taxon>Vertebrata</taxon>
        <taxon>Euteleostomi</taxon>
        <taxon>Mammalia</taxon>
        <taxon>Eutheria</taxon>
        <taxon>Euarchontoglires</taxon>
        <taxon>Primates</taxon>
        <taxon>Haplorrhini</taxon>
        <taxon>Catarrhini</taxon>
        <taxon>Hominidae</taxon>
        <taxon>Pongo</taxon>
    </lineage>
</organism>
<reference key="1">
    <citation type="submission" date="2004-11" db="EMBL/GenBank/DDBJ databases">
        <authorList>
            <consortium name="The German cDNA consortium"/>
        </authorList>
    </citation>
    <scope>NUCLEOTIDE SEQUENCE [LARGE SCALE MRNA]</scope>
    <source>
        <tissue>Kidney</tissue>
    </source>
</reference>
<comment type="subcellular location">
    <subcellularLocation>
        <location evidence="1">Nucleus</location>
    </subcellularLocation>
</comment>
<comment type="similarity">
    <text evidence="3">Belongs to the SH3BGR family.</text>
</comment>
<feature type="chain" id="PRO_0000383687" description="SH3 domain-binding glutamic acid-rich-like protein 2">
    <location>
        <begin position="1"/>
        <end position="107"/>
    </location>
</feature>
<feature type="short sequence motif" description="SH3-binding" evidence="2">
    <location>
        <begin position="61"/>
        <end position="67"/>
    </location>
</feature>
<evidence type="ECO:0000250" key="1"/>
<evidence type="ECO:0000255" key="2"/>
<evidence type="ECO:0000305" key="3"/>
<accession>Q5REQ9</accession>
<dbReference type="EMBL" id="CR857459">
    <property type="protein sequence ID" value="CAH89748.1"/>
    <property type="molecule type" value="mRNA"/>
</dbReference>
<dbReference type="RefSeq" id="XP_063580795.1">
    <property type="nucleotide sequence ID" value="XM_063724725.1"/>
</dbReference>
<dbReference type="BMRB" id="Q5REQ9"/>
<dbReference type="SMR" id="Q5REQ9"/>
<dbReference type="GeneID" id="100174571"/>
<dbReference type="eggNOG" id="KOG4023">
    <property type="taxonomic scope" value="Eukaryota"/>
</dbReference>
<dbReference type="InParanoid" id="Q5REQ9"/>
<dbReference type="Proteomes" id="UP000001595">
    <property type="component" value="Unplaced"/>
</dbReference>
<dbReference type="GO" id="GO:0005737">
    <property type="term" value="C:cytoplasm"/>
    <property type="evidence" value="ECO:0007669"/>
    <property type="project" value="TreeGrafter"/>
</dbReference>
<dbReference type="GO" id="GO:0005634">
    <property type="term" value="C:nucleus"/>
    <property type="evidence" value="ECO:0007669"/>
    <property type="project" value="UniProtKB-SubCell"/>
</dbReference>
<dbReference type="GO" id="GO:0017124">
    <property type="term" value="F:SH3 domain binding"/>
    <property type="evidence" value="ECO:0007669"/>
    <property type="project" value="UniProtKB-KW"/>
</dbReference>
<dbReference type="CDD" id="cd03030">
    <property type="entry name" value="GRX_SH3BGR"/>
    <property type="match status" value="1"/>
</dbReference>
<dbReference type="FunFam" id="3.40.30.10:FF:000065">
    <property type="entry name" value="SH3 domain-binding glutamic acid-rich-like protein"/>
    <property type="match status" value="1"/>
</dbReference>
<dbReference type="Gene3D" id="3.40.30.10">
    <property type="entry name" value="Glutaredoxin"/>
    <property type="match status" value="1"/>
</dbReference>
<dbReference type="InterPro" id="IPR006993">
    <property type="entry name" value="Glut_rich_SH3-bd"/>
</dbReference>
<dbReference type="InterPro" id="IPR051033">
    <property type="entry name" value="SH3BGR"/>
</dbReference>
<dbReference type="InterPro" id="IPR036249">
    <property type="entry name" value="Thioredoxin-like_sf"/>
</dbReference>
<dbReference type="PANTHER" id="PTHR12232">
    <property type="entry name" value="SH3 DOMAIN-BINDING GLUTAMIC ACID-RICH-LIKE PROTEIN"/>
    <property type="match status" value="1"/>
</dbReference>
<dbReference type="PANTHER" id="PTHR12232:SF4">
    <property type="entry name" value="SH3 DOMAIN-BINDING GLUTAMIC ACID-RICH-LIKE PROTEIN 2"/>
    <property type="match status" value="1"/>
</dbReference>
<dbReference type="Pfam" id="PF04908">
    <property type="entry name" value="SH3BGR"/>
    <property type="match status" value="1"/>
</dbReference>
<dbReference type="PIRSF" id="PIRSF008142">
    <property type="entry name" value="SH3-bind_E-rich_L"/>
    <property type="match status" value="1"/>
</dbReference>
<dbReference type="SUPFAM" id="SSF52833">
    <property type="entry name" value="Thioredoxin-like"/>
    <property type="match status" value="1"/>
</dbReference>
<keyword id="KW-0539">Nucleus</keyword>
<keyword id="KW-1185">Reference proteome</keyword>
<keyword id="KW-0729">SH3-binding</keyword>
<sequence>MVIRVFIASSSGFVAIKKKQQDVVRFLEANKIEFEEVDITMSEEQRQWMYKNVPLEKKPTQGNPLPPQIFNGDRYCGDYDSFFESKESNTVFSFLGLKPRLASKAEP</sequence>